<evidence type="ECO:0000255" key="1">
    <source>
        <dbReference type="HAMAP-Rule" id="MF_00082"/>
    </source>
</evidence>
<dbReference type="EC" id="2.7.2.8" evidence="1"/>
<dbReference type="EMBL" id="CP000554">
    <property type="protein sequence ID" value="ABM77485.1"/>
    <property type="molecule type" value="Genomic_DNA"/>
</dbReference>
<dbReference type="RefSeq" id="WP_011825399.1">
    <property type="nucleotide sequence ID" value="NC_008820.1"/>
</dbReference>
<dbReference type="SMR" id="A2C7M5"/>
<dbReference type="STRING" id="59922.P9303_07341"/>
<dbReference type="KEGG" id="pmf:P9303_07341"/>
<dbReference type="HOGENOM" id="CLU_053680_0_0_3"/>
<dbReference type="BioCyc" id="PMAR59922:G1G80-670-MONOMER"/>
<dbReference type="UniPathway" id="UPA00068">
    <property type="reaction ID" value="UER00107"/>
</dbReference>
<dbReference type="Proteomes" id="UP000002274">
    <property type="component" value="Chromosome"/>
</dbReference>
<dbReference type="GO" id="GO:0005737">
    <property type="term" value="C:cytoplasm"/>
    <property type="evidence" value="ECO:0007669"/>
    <property type="project" value="UniProtKB-SubCell"/>
</dbReference>
<dbReference type="GO" id="GO:0003991">
    <property type="term" value="F:acetylglutamate kinase activity"/>
    <property type="evidence" value="ECO:0007669"/>
    <property type="project" value="UniProtKB-UniRule"/>
</dbReference>
<dbReference type="GO" id="GO:0005524">
    <property type="term" value="F:ATP binding"/>
    <property type="evidence" value="ECO:0007669"/>
    <property type="project" value="UniProtKB-UniRule"/>
</dbReference>
<dbReference type="GO" id="GO:0042450">
    <property type="term" value="P:arginine biosynthetic process via ornithine"/>
    <property type="evidence" value="ECO:0007669"/>
    <property type="project" value="UniProtKB-UniRule"/>
</dbReference>
<dbReference type="GO" id="GO:0006526">
    <property type="term" value="P:L-arginine biosynthetic process"/>
    <property type="evidence" value="ECO:0007669"/>
    <property type="project" value="UniProtKB-UniPathway"/>
</dbReference>
<dbReference type="CDD" id="cd04250">
    <property type="entry name" value="AAK_NAGK-C"/>
    <property type="match status" value="1"/>
</dbReference>
<dbReference type="FunFam" id="3.40.1160.10:FF:000004">
    <property type="entry name" value="Acetylglutamate kinase"/>
    <property type="match status" value="1"/>
</dbReference>
<dbReference type="Gene3D" id="3.40.1160.10">
    <property type="entry name" value="Acetylglutamate kinase-like"/>
    <property type="match status" value="1"/>
</dbReference>
<dbReference type="HAMAP" id="MF_00082">
    <property type="entry name" value="ArgB"/>
    <property type="match status" value="1"/>
</dbReference>
<dbReference type="InterPro" id="IPR036393">
    <property type="entry name" value="AceGlu_kinase-like_sf"/>
</dbReference>
<dbReference type="InterPro" id="IPR004662">
    <property type="entry name" value="AcgluKinase_fam"/>
</dbReference>
<dbReference type="InterPro" id="IPR037528">
    <property type="entry name" value="ArgB"/>
</dbReference>
<dbReference type="InterPro" id="IPR001048">
    <property type="entry name" value="Asp/Glu/Uridylate_kinase"/>
</dbReference>
<dbReference type="InterPro" id="IPR001057">
    <property type="entry name" value="Glu/AcGlu_kinase"/>
</dbReference>
<dbReference type="InterPro" id="IPR041727">
    <property type="entry name" value="NAGK-C"/>
</dbReference>
<dbReference type="NCBIfam" id="TIGR00761">
    <property type="entry name" value="argB"/>
    <property type="match status" value="1"/>
</dbReference>
<dbReference type="PANTHER" id="PTHR23342">
    <property type="entry name" value="N-ACETYLGLUTAMATE SYNTHASE"/>
    <property type="match status" value="1"/>
</dbReference>
<dbReference type="PANTHER" id="PTHR23342:SF0">
    <property type="entry name" value="N-ACETYLGLUTAMATE SYNTHASE, MITOCHONDRIAL"/>
    <property type="match status" value="1"/>
</dbReference>
<dbReference type="Pfam" id="PF00696">
    <property type="entry name" value="AA_kinase"/>
    <property type="match status" value="1"/>
</dbReference>
<dbReference type="PIRSF" id="PIRSF000728">
    <property type="entry name" value="NAGK"/>
    <property type="match status" value="1"/>
</dbReference>
<dbReference type="PRINTS" id="PR00474">
    <property type="entry name" value="GLU5KINASE"/>
</dbReference>
<dbReference type="SUPFAM" id="SSF53633">
    <property type="entry name" value="Carbamate kinase-like"/>
    <property type="match status" value="1"/>
</dbReference>
<keyword id="KW-0028">Amino-acid biosynthesis</keyword>
<keyword id="KW-0055">Arginine biosynthesis</keyword>
<keyword id="KW-0067">ATP-binding</keyword>
<keyword id="KW-0963">Cytoplasm</keyword>
<keyword id="KW-0418">Kinase</keyword>
<keyword id="KW-0547">Nucleotide-binding</keyword>
<keyword id="KW-0808">Transferase</keyword>
<protein>
    <recommendedName>
        <fullName evidence="1">Acetylglutamate kinase</fullName>
        <ecNumber evidence="1">2.7.2.8</ecNumber>
    </recommendedName>
    <alternativeName>
        <fullName evidence="1">N-acetyl-L-glutamate 5-phosphotransferase</fullName>
    </alternativeName>
    <alternativeName>
        <fullName evidence="1">NAG kinase</fullName>
        <shortName evidence="1">NAGK</shortName>
    </alternativeName>
</protein>
<sequence length="308" mass="32356">MESAKSAAALVEPCQTNSARRLTEDDSLRVSVLSEALPYIQRFSGRRIVIKYGGAAMAHANLQEAVFRDLALLVSVGVEPVVVHGGGPEINQWLERLEIPAKFRDGLRVTDADTMDVVEMVLVGRVNKQIVNGLNQLGAKAVGLSGSDGSLVEARPWGDGSHGLVGDVARVNTDVLEPILAKGYVPVISSVAATVEGCSHNINADTVAGEIAAALEAEKLILLTDTPGILLDRDDPSSLVHQLRLSEARQLIAEGVVAGGMTPKTECCIRALAQGVGAAHIIDGRVPHALLLEVFTDAGIGTMVVGRS</sequence>
<proteinExistence type="inferred from homology"/>
<accession>A2C7M5</accession>
<feature type="chain" id="PRO_1000010525" description="Acetylglutamate kinase">
    <location>
        <begin position="1"/>
        <end position="308"/>
    </location>
</feature>
<feature type="binding site" evidence="1">
    <location>
        <begin position="86"/>
        <end position="87"/>
    </location>
    <ligand>
        <name>substrate</name>
    </ligand>
</feature>
<feature type="binding site" evidence="1">
    <location>
        <position position="108"/>
    </location>
    <ligand>
        <name>substrate</name>
    </ligand>
</feature>
<feature type="binding site" evidence="1">
    <location>
        <position position="201"/>
    </location>
    <ligand>
        <name>substrate</name>
    </ligand>
</feature>
<feature type="site" description="Transition state stabilizer" evidence="1">
    <location>
        <position position="51"/>
    </location>
</feature>
<feature type="site" description="Transition state stabilizer" evidence="1">
    <location>
        <position position="264"/>
    </location>
</feature>
<gene>
    <name evidence="1" type="primary">argB</name>
    <name type="ordered locus">P9303_07341</name>
</gene>
<comment type="function">
    <text evidence="1">Catalyzes the ATP-dependent phosphorylation of N-acetyl-L-glutamate.</text>
</comment>
<comment type="catalytic activity">
    <reaction evidence="1">
        <text>N-acetyl-L-glutamate + ATP = N-acetyl-L-glutamyl 5-phosphate + ADP</text>
        <dbReference type="Rhea" id="RHEA:14629"/>
        <dbReference type="ChEBI" id="CHEBI:30616"/>
        <dbReference type="ChEBI" id="CHEBI:44337"/>
        <dbReference type="ChEBI" id="CHEBI:57936"/>
        <dbReference type="ChEBI" id="CHEBI:456216"/>
        <dbReference type="EC" id="2.7.2.8"/>
    </reaction>
</comment>
<comment type="pathway">
    <text evidence="1">Amino-acid biosynthesis; L-arginine biosynthesis; N(2)-acetyl-L-ornithine from L-glutamate: step 2/4.</text>
</comment>
<comment type="subcellular location">
    <subcellularLocation>
        <location evidence="1">Cytoplasm</location>
    </subcellularLocation>
</comment>
<comment type="similarity">
    <text evidence="1">Belongs to the acetylglutamate kinase family. ArgB subfamily.</text>
</comment>
<name>ARGB_PROM3</name>
<reference key="1">
    <citation type="journal article" date="2007" name="PLoS Genet.">
        <title>Patterns and implications of gene gain and loss in the evolution of Prochlorococcus.</title>
        <authorList>
            <person name="Kettler G.C."/>
            <person name="Martiny A.C."/>
            <person name="Huang K."/>
            <person name="Zucker J."/>
            <person name="Coleman M.L."/>
            <person name="Rodrigue S."/>
            <person name="Chen F."/>
            <person name="Lapidus A."/>
            <person name="Ferriera S."/>
            <person name="Johnson J."/>
            <person name="Steglich C."/>
            <person name="Church G.M."/>
            <person name="Richardson P."/>
            <person name="Chisholm S.W."/>
        </authorList>
    </citation>
    <scope>NUCLEOTIDE SEQUENCE [LARGE SCALE GENOMIC DNA]</scope>
    <source>
        <strain>MIT 9303</strain>
    </source>
</reference>
<organism>
    <name type="scientific">Prochlorococcus marinus (strain MIT 9303)</name>
    <dbReference type="NCBI Taxonomy" id="59922"/>
    <lineage>
        <taxon>Bacteria</taxon>
        <taxon>Bacillati</taxon>
        <taxon>Cyanobacteriota</taxon>
        <taxon>Cyanophyceae</taxon>
        <taxon>Synechococcales</taxon>
        <taxon>Prochlorococcaceae</taxon>
        <taxon>Prochlorococcus</taxon>
    </lineage>
</organism>